<reference key="1">
    <citation type="journal article" date="2005" name="Infect. Immun.">
        <title>Whole-genome analyses of speciation events in pathogenic Brucellae.</title>
        <authorList>
            <person name="Chain P.S."/>
            <person name="Comerci D.J."/>
            <person name="Tolmasky M.E."/>
            <person name="Larimer F.W."/>
            <person name="Malfatti S.A."/>
            <person name="Vergez L.M."/>
            <person name="Aguero F."/>
            <person name="Land M.L."/>
            <person name="Ugalde R.A."/>
            <person name="Garcia E."/>
        </authorList>
    </citation>
    <scope>NUCLEOTIDE SEQUENCE [LARGE SCALE GENOMIC DNA]</scope>
    <source>
        <strain>2308</strain>
    </source>
</reference>
<comment type="function">
    <text evidence="1">Transport of potassium into the cell. Likely operates as a K(+):H(+) symporter.</text>
</comment>
<comment type="catalytic activity">
    <reaction evidence="1">
        <text>K(+)(in) + H(+)(in) = K(+)(out) + H(+)(out)</text>
        <dbReference type="Rhea" id="RHEA:28490"/>
        <dbReference type="ChEBI" id="CHEBI:15378"/>
        <dbReference type="ChEBI" id="CHEBI:29103"/>
    </reaction>
    <physiologicalReaction direction="right-to-left" evidence="1">
        <dbReference type="Rhea" id="RHEA:28492"/>
    </physiologicalReaction>
</comment>
<comment type="subcellular location">
    <subcellularLocation>
        <location evidence="1">Cell inner membrane</location>
        <topology evidence="1">Multi-pass membrane protein</topology>
    </subcellularLocation>
</comment>
<comment type="similarity">
    <text evidence="1">Belongs to the HAK/KUP transporter (TC 2.A.72) family.</text>
</comment>
<organism>
    <name type="scientific">Brucella abortus (strain 2308)</name>
    <dbReference type="NCBI Taxonomy" id="359391"/>
    <lineage>
        <taxon>Bacteria</taxon>
        <taxon>Pseudomonadati</taxon>
        <taxon>Pseudomonadota</taxon>
        <taxon>Alphaproteobacteria</taxon>
        <taxon>Hyphomicrobiales</taxon>
        <taxon>Brucellaceae</taxon>
        <taxon>Brucella/Ochrobactrum group</taxon>
        <taxon>Brucella</taxon>
    </lineage>
</organism>
<dbReference type="EMBL" id="AM040264">
    <property type="protein sequence ID" value="CAJ11358.1"/>
    <property type="molecule type" value="Genomic_DNA"/>
</dbReference>
<dbReference type="RefSeq" id="WP_002964493.1">
    <property type="nucleotide sequence ID" value="NZ_KN046823.1"/>
</dbReference>
<dbReference type="STRING" id="359391.BAB1_1402"/>
<dbReference type="KEGG" id="bmf:BAB1_1402"/>
<dbReference type="PATRIC" id="fig|359391.11.peg.852"/>
<dbReference type="HOGENOM" id="CLU_008142_4_2_5"/>
<dbReference type="PhylomeDB" id="Q2YQM9"/>
<dbReference type="Proteomes" id="UP000002719">
    <property type="component" value="Chromosome I"/>
</dbReference>
<dbReference type="GO" id="GO:0005886">
    <property type="term" value="C:plasma membrane"/>
    <property type="evidence" value="ECO:0007669"/>
    <property type="project" value="UniProtKB-SubCell"/>
</dbReference>
<dbReference type="GO" id="GO:0015079">
    <property type="term" value="F:potassium ion transmembrane transporter activity"/>
    <property type="evidence" value="ECO:0007669"/>
    <property type="project" value="UniProtKB-UniRule"/>
</dbReference>
<dbReference type="GO" id="GO:0015293">
    <property type="term" value="F:symporter activity"/>
    <property type="evidence" value="ECO:0007669"/>
    <property type="project" value="UniProtKB-UniRule"/>
</dbReference>
<dbReference type="HAMAP" id="MF_01522">
    <property type="entry name" value="Kup"/>
    <property type="match status" value="1"/>
</dbReference>
<dbReference type="InterPro" id="IPR003855">
    <property type="entry name" value="K+_transporter"/>
</dbReference>
<dbReference type="InterPro" id="IPR053952">
    <property type="entry name" value="K_trans_C"/>
</dbReference>
<dbReference type="InterPro" id="IPR053951">
    <property type="entry name" value="K_trans_N"/>
</dbReference>
<dbReference type="InterPro" id="IPR023051">
    <property type="entry name" value="Kup"/>
</dbReference>
<dbReference type="PANTHER" id="PTHR30540:SF79">
    <property type="entry name" value="LOW AFFINITY POTASSIUM TRANSPORT SYSTEM PROTEIN KUP"/>
    <property type="match status" value="1"/>
</dbReference>
<dbReference type="PANTHER" id="PTHR30540">
    <property type="entry name" value="OSMOTIC STRESS POTASSIUM TRANSPORTER"/>
    <property type="match status" value="1"/>
</dbReference>
<dbReference type="Pfam" id="PF02705">
    <property type="entry name" value="K_trans"/>
    <property type="match status" value="1"/>
</dbReference>
<dbReference type="Pfam" id="PF22776">
    <property type="entry name" value="K_trans_C"/>
    <property type="match status" value="1"/>
</dbReference>
<keyword id="KW-0997">Cell inner membrane</keyword>
<keyword id="KW-1003">Cell membrane</keyword>
<keyword id="KW-0406">Ion transport</keyword>
<keyword id="KW-0472">Membrane</keyword>
<keyword id="KW-0630">Potassium</keyword>
<keyword id="KW-0633">Potassium transport</keyword>
<keyword id="KW-1185">Reference proteome</keyword>
<keyword id="KW-0769">Symport</keyword>
<keyword id="KW-0812">Transmembrane</keyword>
<keyword id="KW-1133">Transmembrane helix</keyword>
<keyword id="KW-0813">Transport</keyword>
<gene>
    <name evidence="1" type="primary">kup</name>
    <name type="ordered locus">BAB1_1402</name>
</gene>
<proteinExistence type="inferred from homology"/>
<protein>
    <recommendedName>
        <fullName evidence="1">Probable potassium transport system protein Kup</fullName>
    </recommendedName>
</protein>
<feature type="chain" id="PRO_0000279768" description="Probable potassium transport system protein Kup">
    <location>
        <begin position="1"/>
        <end position="651"/>
    </location>
</feature>
<feature type="transmembrane region" description="Helical" evidence="1">
    <location>
        <begin position="41"/>
        <end position="61"/>
    </location>
</feature>
<feature type="transmembrane region" description="Helical" evidence="1">
    <location>
        <begin position="82"/>
        <end position="102"/>
    </location>
</feature>
<feature type="transmembrane region" description="Helical" evidence="1">
    <location>
        <begin position="130"/>
        <end position="150"/>
    </location>
</feature>
<feature type="transmembrane region" description="Helical" evidence="1">
    <location>
        <begin position="163"/>
        <end position="183"/>
    </location>
</feature>
<feature type="transmembrane region" description="Helical" evidence="1">
    <location>
        <begin position="194"/>
        <end position="214"/>
    </location>
</feature>
<feature type="transmembrane region" description="Helical" evidence="1">
    <location>
        <begin position="235"/>
        <end position="255"/>
    </location>
</feature>
<feature type="transmembrane region" description="Helical" evidence="1">
    <location>
        <begin position="276"/>
        <end position="296"/>
    </location>
</feature>
<feature type="transmembrane region" description="Helical" evidence="1">
    <location>
        <begin position="309"/>
        <end position="329"/>
    </location>
</feature>
<feature type="transmembrane region" description="Helical" evidence="1">
    <location>
        <begin position="366"/>
        <end position="386"/>
    </location>
</feature>
<feature type="transmembrane region" description="Helical" evidence="1">
    <location>
        <begin position="395"/>
        <end position="415"/>
    </location>
</feature>
<feature type="transmembrane region" description="Helical" evidence="1">
    <location>
        <begin position="426"/>
        <end position="446"/>
    </location>
</feature>
<feature type="transmembrane region" description="Helical" evidence="1">
    <location>
        <begin position="450"/>
        <end position="470"/>
    </location>
</feature>
<sequence>MSGELNGNDTSAQAAVSAGSVLEGAAFADEGEQHNESMKTLVLGALGVVYGDIGTSPIYAFREALHAAATNGILARSDILGVVSLIFWALTLVVTVKYVLFVLRADNNGEGGILSLMALVRGALKGRPDLILGVGICGAALFFGDAVITPAISVLSAMEGLEIVAPNLTPFVVPAAVVILVTLFSVQKLGTGRVAIVFGPIMALWFVALGASGLWHIFDDPTVMAALNPYYAVRFLTVSPAVAFVTVGAVFLAMTGAEALYADLGHFGRKPIVRAWLWIVFPCLLLNYFGQAAFILSHGEAAALPFFQMIPSFALWPMVLLATAATVIASQAVITGAYSVARQAVQLNILPRLEIQHTSEKLHGQIYIPRVNLLLGLAVVILVLGFEKSSNLAAAYGIAVTGNMLVTTVLLYIAMTRIWNWRVSRALPIILGFLVIDMLFFSANIIKVHEGGWASIGIATVLVLIMWTWVRGTRHLFQKTRKAEVPLDLIVEQMAKRPPTIVPGTAVFLTGDPKSAPTALMHSLKHYKVLHENNVILTVVTASKPWVASADRARVSQYNERFMLVTLTFGYMQQPNIPRALGLCRRLGWKFDIMTTSFFLSRRSLKASVHSGMPLWQDKLFILLARTASDATEYFQIPTGRVVEIGTQVNI</sequence>
<evidence type="ECO:0000255" key="1">
    <source>
        <dbReference type="HAMAP-Rule" id="MF_01522"/>
    </source>
</evidence>
<name>KUP_BRUA2</name>
<accession>Q2YQM9</accession>